<keyword id="KW-0025">Alternative splicing</keyword>
<keyword id="KW-0472">Membrane</keyword>
<keyword id="KW-0675">Receptor</keyword>
<keyword id="KW-1185">Reference proteome</keyword>
<keyword id="KW-0812">Transmembrane</keyword>
<keyword id="KW-1133">Transmembrane helix</keyword>
<comment type="function">
    <text evidence="1">May be involved in signal transduction as a component of a multimeric receptor complex.</text>
</comment>
<comment type="interaction">
    <interactant intactId="EBI-12839612">
        <id>Q96JA4</id>
    </interactant>
    <interactant intactId="EBI-358858">
        <id>O14735</id>
        <label>CDIPT</label>
    </interactant>
    <organismsDiffer>false</organismsDiffer>
    <experiments>3</experiments>
</comment>
<comment type="interaction">
    <interactant intactId="EBI-12839612">
        <id>Q96JA4</id>
    </interactant>
    <interactant intactId="EBI-12256978">
        <id>Q8N6F1-2</id>
        <label>CLDN19</label>
    </interactant>
    <organismsDiffer>false</organismsDiffer>
    <experiments>3</experiments>
</comment>
<comment type="interaction">
    <interactant intactId="EBI-12839612">
        <id>Q96JA4</id>
    </interactant>
    <interactant intactId="EBI-6166686">
        <id>Q96F15</id>
        <label>GIMAP5</label>
    </interactant>
    <organismsDiffer>false</organismsDiffer>
    <experiments>3</experiments>
</comment>
<comment type="interaction">
    <interactant intactId="EBI-12839612">
        <id>Q96JA4</id>
    </interactant>
    <interactant intactId="EBI-8652744">
        <id>Q96IW7</id>
        <label>SEC22A</label>
    </interactant>
    <organismsDiffer>false</organismsDiffer>
    <experiments>3</experiments>
</comment>
<comment type="interaction">
    <interactant intactId="EBI-12839612">
        <id>Q96JA4</id>
    </interactant>
    <interactant intactId="EBI-3922833">
        <id>Q969K7</id>
        <label>TMEM54</label>
    </interactant>
    <organismsDiffer>false</organismsDiffer>
    <experiments>3</experiments>
</comment>
<comment type="interaction">
    <interactant intactId="EBI-12839612">
        <id>Q96JA4</id>
    </interactant>
    <interactant intactId="EBI-2548832">
        <id>Q8N661</id>
        <label>TMEM86B</label>
    </interactant>
    <organismsDiffer>false</organismsDiffer>
    <experiments>3</experiments>
</comment>
<comment type="subcellular location">
    <subcellularLocation>
        <location evidence="9">Membrane</location>
        <topology evidence="9">Multi-pass membrane protein</topology>
    </subcellularLocation>
</comment>
<comment type="alternative products">
    <event type="alternative splicing"/>
    <isoform>
        <id>Q96JA4-1</id>
        <name>1</name>
        <sequence type="displayed"/>
    </isoform>
    <isoform>
        <id>Q96JA4-2</id>
        <name>2</name>
        <sequence type="described" ref="VSP_031780"/>
    </isoform>
    <isoform>
        <id>Q96JA4-4</id>
        <name>3</name>
        <sequence type="described" ref="VSP_031779 VSP_031781 VSP_031782"/>
    </isoform>
    <isoform>
        <id>Q96JA4-5</id>
        <name>4</name>
        <sequence type="described" ref="VSP_056734"/>
    </isoform>
</comment>
<comment type="similarity">
    <text evidence="9">Belongs to the MS4A family.</text>
</comment>
<sequence>MESTSQDRRATHVITIKPNETVLTAFPYRPHSSLLDFLKGEPRVLGATQILLALIIVGFGTIFALNYIGFSQRLPLVVLTGYPFWGALIFILTGYLTVTDKKSKLLGQGVTGMNVISSLVAITGITFTILSYRHQDKYCQMPSFEEICVFSRTLFIVLFFLPSDVTQNSEQPAPEENDQLQFVLQEEFSSDDSTTNAQSVIFGGYAFFKLTLSRSPLVSQPGNKGREFVPDEQKQSILPSPKFSEEEIEPLPPTLEKKPSENMSIQLDSTFKQMKDEDLQSAIVQPSQMQTKLLQDQAASLQVFPSHSALKLEDISPEDLPSQALPVEGLSEQTMPSKSTSSHVKQSSNLTANDLPPQGILSQDTSSQDMLFHDMTSQDMQSLDMLSQDTPSHAMPPQDIPSQDMLSQALSAHAILPEASTSHIVQFPEIQHLLQQPPDLQPENTEPQNQQILQMSYQDIRSEVMEETKEWKSEEELHRRKSSRRHSLNQQTKALQYLRRHSLDVQAKGQKSSKRHSLDQQSKGWQSPKQKSLDQQIKDWLSPKRHSVDKQAQLNQTKEQLPDQQAEDQQAKGEQYPEGQSKDGQVKDQQTDKEQNSKKQTQDQQTEDQPAQEKKSPKGQFQNVQAEGQQAQVEKVPKLLCQDSESQIQQYQFWQFHKGNLQAGQPRTVNLLAKNPLTG</sequence>
<protein>
    <recommendedName>
        <fullName>Membrane-spanning 4-domains subfamily A member 14</fullName>
    </recommendedName>
    <alternativeName>
        <fullName>Testis development protein NYD-SP21</fullName>
    </alternativeName>
</protein>
<proteinExistence type="evidence at protein level"/>
<evidence type="ECO:0000250" key="1"/>
<evidence type="ECO:0000255" key="2"/>
<evidence type="ECO:0000256" key="3">
    <source>
        <dbReference type="SAM" id="MobiDB-lite"/>
    </source>
</evidence>
<evidence type="ECO:0000269" key="4">
    <source>
    </source>
</evidence>
<evidence type="ECO:0000269" key="5">
    <source ref="1"/>
</evidence>
<evidence type="ECO:0000269" key="6">
    <source ref="2"/>
</evidence>
<evidence type="ECO:0000303" key="7">
    <source>
    </source>
</evidence>
<evidence type="ECO:0000303" key="8">
    <source ref="2"/>
</evidence>
<evidence type="ECO:0000305" key="9"/>
<dbReference type="EMBL" id="AF367473">
    <property type="protein sequence ID" value="AAK53409.2"/>
    <property type="molecule type" value="mRNA"/>
</dbReference>
<dbReference type="EMBL" id="AY094610">
    <property type="protein sequence ID" value="AAM48587.1"/>
    <property type="molecule type" value="mRNA"/>
</dbReference>
<dbReference type="EMBL" id="AY094611">
    <property type="protein sequence ID" value="AAM48588.1"/>
    <property type="molecule type" value="mRNA"/>
</dbReference>
<dbReference type="EMBL" id="AY584610">
    <property type="protein sequence ID" value="AAV91959.1"/>
    <property type="molecule type" value="mRNA"/>
</dbReference>
<dbReference type="EMBL" id="AP003127">
    <property type="status" value="NOT_ANNOTATED_CDS"/>
    <property type="molecule type" value="Genomic_DNA"/>
</dbReference>
<dbReference type="EMBL" id="BC107431">
    <property type="protein sequence ID" value="AAI07432.1"/>
    <property type="molecule type" value="mRNA"/>
</dbReference>
<dbReference type="EMBL" id="AL137391">
    <property type="protein sequence ID" value="CAB70719.1"/>
    <property type="molecule type" value="mRNA"/>
</dbReference>
<dbReference type="CCDS" id="CCDS31569.1">
    <molecule id="Q96JA4-1"/>
</dbReference>
<dbReference type="CCDS" id="CCDS41652.1">
    <molecule id="Q96JA4-2"/>
</dbReference>
<dbReference type="CCDS" id="CCDS58136.1">
    <molecule id="Q96JA4-5"/>
</dbReference>
<dbReference type="PIR" id="T46450">
    <property type="entry name" value="T46450"/>
</dbReference>
<dbReference type="RefSeq" id="NP_001073160.1">
    <molecule id="Q96JA4-2"/>
    <property type="nucleotide sequence ID" value="NM_001079692.3"/>
</dbReference>
<dbReference type="RefSeq" id="NP_001248757.1">
    <molecule id="Q96JA4-5"/>
    <property type="nucleotide sequence ID" value="NM_001261828.2"/>
</dbReference>
<dbReference type="RefSeq" id="NP_115986.3">
    <molecule id="Q96JA4-1"/>
    <property type="nucleotide sequence ID" value="NM_032597.4"/>
</dbReference>
<dbReference type="BioGRID" id="124204">
    <property type="interactions" value="6"/>
</dbReference>
<dbReference type="FunCoup" id="Q96JA4">
    <property type="interactions" value="171"/>
</dbReference>
<dbReference type="IntAct" id="Q96JA4">
    <property type="interactions" value="6"/>
</dbReference>
<dbReference type="STRING" id="9606.ENSP00000433761"/>
<dbReference type="TCDB" id="1.A.37.3.1">
    <property type="family name" value="the cd20 ca(2+) channel (cd20) family"/>
</dbReference>
<dbReference type="iPTMnet" id="Q96JA4"/>
<dbReference type="PhosphoSitePlus" id="Q96JA4"/>
<dbReference type="SwissPalm" id="Q96JA4"/>
<dbReference type="BioMuta" id="MS4A14"/>
<dbReference type="DMDM" id="296434579"/>
<dbReference type="jPOST" id="Q96JA4"/>
<dbReference type="PaxDb" id="9606-ENSP00000433761"/>
<dbReference type="PeptideAtlas" id="Q96JA4"/>
<dbReference type="ProteomicsDB" id="21112"/>
<dbReference type="ProteomicsDB" id="76921">
    <molecule id="Q96JA4-1"/>
</dbReference>
<dbReference type="ProteomicsDB" id="76922">
    <molecule id="Q96JA4-2"/>
</dbReference>
<dbReference type="Pumba" id="Q96JA4"/>
<dbReference type="Antibodypedia" id="43483">
    <property type="antibodies" value="91 antibodies from 18 providers"/>
</dbReference>
<dbReference type="DNASU" id="84689"/>
<dbReference type="Ensembl" id="ENST00000300187.11">
    <molecule id="Q96JA4-1"/>
    <property type="protein sequence ID" value="ENSP00000300187.6"/>
    <property type="gene ID" value="ENSG00000166928.11"/>
</dbReference>
<dbReference type="Ensembl" id="ENST00000395005.6">
    <molecule id="Q96JA4-2"/>
    <property type="protein sequence ID" value="ENSP00000378453.2"/>
    <property type="gene ID" value="ENSG00000166928.11"/>
</dbReference>
<dbReference type="Ensembl" id="ENST00000531783.5">
    <molecule id="Q96JA4-5"/>
    <property type="protein sequence ID" value="ENSP00000433761.1"/>
    <property type="gene ID" value="ENSG00000166928.11"/>
</dbReference>
<dbReference type="GeneID" id="84689"/>
<dbReference type="KEGG" id="hsa:84689"/>
<dbReference type="MANE-Select" id="ENST00000300187.11">
    <property type="protein sequence ID" value="ENSP00000300187.6"/>
    <property type="RefSeq nucleotide sequence ID" value="NM_032597.5"/>
    <property type="RefSeq protein sequence ID" value="NP_115986.3"/>
</dbReference>
<dbReference type="UCSC" id="uc001npj.4">
    <molecule id="Q96JA4-1"/>
    <property type="organism name" value="human"/>
</dbReference>
<dbReference type="AGR" id="HGNC:30706"/>
<dbReference type="CTD" id="84689"/>
<dbReference type="DisGeNET" id="84689"/>
<dbReference type="GeneCards" id="MS4A14"/>
<dbReference type="HGNC" id="HGNC:30706">
    <property type="gene designation" value="MS4A14"/>
</dbReference>
<dbReference type="HPA" id="ENSG00000166928">
    <property type="expression patterns" value="Tissue enriched (testis)"/>
</dbReference>
<dbReference type="neXtProt" id="NX_Q96JA4"/>
<dbReference type="OpenTargets" id="ENSG00000166928"/>
<dbReference type="PharmGKB" id="PA162396237"/>
<dbReference type="VEuPathDB" id="HostDB:ENSG00000166928"/>
<dbReference type="eggNOG" id="ENOG502S7I2">
    <property type="taxonomic scope" value="Eukaryota"/>
</dbReference>
<dbReference type="GeneTree" id="ENSGT00940000163132"/>
<dbReference type="InParanoid" id="Q96JA4"/>
<dbReference type="OMA" id="EWQFEMQ"/>
<dbReference type="OrthoDB" id="9838243at2759"/>
<dbReference type="PAN-GO" id="Q96JA4">
    <property type="GO annotations" value="2 GO annotations based on evolutionary models"/>
</dbReference>
<dbReference type="PhylomeDB" id="Q96JA4"/>
<dbReference type="TreeFam" id="TF337098"/>
<dbReference type="PathwayCommons" id="Q96JA4"/>
<dbReference type="SignaLink" id="Q96JA4"/>
<dbReference type="BioGRID-ORCS" id="84689">
    <property type="hits" value="10 hits in 1140 CRISPR screens"/>
</dbReference>
<dbReference type="GenomeRNAi" id="84689"/>
<dbReference type="Pharos" id="Q96JA4">
    <property type="development level" value="Tdark"/>
</dbReference>
<dbReference type="PRO" id="PR:Q96JA4"/>
<dbReference type="Proteomes" id="UP000005640">
    <property type="component" value="Chromosome 11"/>
</dbReference>
<dbReference type="RNAct" id="Q96JA4">
    <property type="molecule type" value="protein"/>
</dbReference>
<dbReference type="Bgee" id="ENSG00000166928">
    <property type="expression patterns" value="Expressed in sperm and 108 other cell types or tissues"/>
</dbReference>
<dbReference type="ExpressionAtlas" id="Q96JA4">
    <property type="expression patterns" value="baseline and differential"/>
</dbReference>
<dbReference type="GO" id="GO:0005886">
    <property type="term" value="C:plasma membrane"/>
    <property type="evidence" value="ECO:0000318"/>
    <property type="project" value="GO_Central"/>
</dbReference>
<dbReference type="GO" id="GO:0007166">
    <property type="term" value="P:cell surface receptor signaling pathway"/>
    <property type="evidence" value="ECO:0000318"/>
    <property type="project" value="GO_Central"/>
</dbReference>
<dbReference type="InterPro" id="IPR007237">
    <property type="entry name" value="CD20-like"/>
</dbReference>
<dbReference type="InterPro" id="IPR030417">
    <property type="entry name" value="MS4A"/>
</dbReference>
<dbReference type="PANTHER" id="PTHR23320:SF10">
    <property type="entry name" value="MEMBRANE-SPANNING 4-DOMAINS SUBFAMILY A MEMBER 14"/>
    <property type="match status" value="1"/>
</dbReference>
<dbReference type="PANTHER" id="PTHR23320">
    <property type="entry name" value="MEMBRANE-SPANNING 4-DOMAINS SUBFAMILY A MS4A -RELATED"/>
    <property type="match status" value="1"/>
</dbReference>
<dbReference type="Pfam" id="PF04103">
    <property type="entry name" value="CD20"/>
    <property type="match status" value="1"/>
</dbReference>
<gene>
    <name type="primary">MS4A14</name>
    <name type="synonym">MS4A13</name>
    <name type="synonym">MS4A16</name>
</gene>
<name>M4A14_HUMAN</name>
<organism>
    <name type="scientific">Homo sapiens</name>
    <name type="common">Human</name>
    <dbReference type="NCBI Taxonomy" id="9606"/>
    <lineage>
        <taxon>Eukaryota</taxon>
        <taxon>Metazoa</taxon>
        <taxon>Chordata</taxon>
        <taxon>Craniata</taxon>
        <taxon>Vertebrata</taxon>
        <taxon>Euteleostomi</taxon>
        <taxon>Mammalia</taxon>
        <taxon>Eutheria</taxon>
        <taxon>Euarchontoglires</taxon>
        <taxon>Primates</taxon>
        <taxon>Haplorrhini</taxon>
        <taxon>Catarrhini</taxon>
        <taxon>Hominidae</taxon>
        <taxon>Homo</taxon>
    </lineage>
</organism>
<accession>Q96JA4</accession>
<accession>E9PJE3</accession>
<accession>Q2TVT5</accession>
<accession>Q3B7W3</accession>
<accession>Q86XH8</accession>
<accession>Q9NTC2</accession>
<feature type="chain" id="PRO_0000320967" description="Membrane-spanning 4-domains subfamily A member 14">
    <location>
        <begin position="1"/>
        <end position="679"/>
    </location>
</feature>
<feature type="transmembrane region" description="Helical" evidence="2">
    <location>
        <begin position="50"/>
        <end position="70"/>
    </location>
</feature>
<feature type="transmembrane region" description="Helical" evidence="2">
    <location>
        <begin position="76"/>
        <end position="96"/>
    </location>
</feature>
<feature type="transmembrane region" description="Helical" evidence="2">
    <location>
        <begin position="110"/>
        <end position="130"/>
    </location>
</feature>
<feature type="transmembrane region" description="Helical" evidence="2">
    <location>
        <begin position="141"/>
        <end position="161"/>
    </location>
</feature>
<feature type="region of interest" description="Disordered" evidence="3">
    <location>
        <begin position="218"/>
        <end position="259"/>
    </location>
</feature>
<feature type="region of interest" description="Disordered" evidence="3">
    <location>
        <begin position="331"/>
        <end position="363"/>
    </location>
</feature>
<feature type="region of interest" description="Disordered" evidence="3">
    <location>
        <begin position="469"/>
        <end position="491"/>
    </location>
</feature>
<feature type="region of interest" description="Disordered" evidence="3">
    <location>
        <begin position="505"/>
        <end position="633"/>
    </location>
</feature>
<feature type="compositionally biased region" description="Basic and acidic residues" evidence="3">
    <location>
        <begin position="224"/>
        <end position="234"/>
    </location>
</feature>
<feature type="compositionally biased region" description="Low complexity" evidence="3">
    <location>
        <begin position="337"/>
        <end position="348"/>
    </location>
</feature>
<feature type="compositionally biased region" description="Basic and acidic residues" evidence="3">
    <location>
        <begin position="469"/>
        <end position="478"/>
    </location>
</feature>
<feature type="compositionally biased region" description="Polar residues" evidence="3">
    <location>
        <begin position="519"/>
        <end position="535"/>
    </location>
</feature>
<feature type="compositionally biased region" description="Polar residues" evidence="3">
    <location>
        <begin position="550"/>
        <end position="563"/>
    </location>
</feature>
<feature type="compositionally biased region" description="Basic and acidic residues" evidence="3">
    <location>
        <begin position="580"/>
        <end position="601"/>
    </location>
</feature>
<feature type="compositionally biased region" description="Polar residues" evidence="3">
    <location>
        <begin position="619"/>
        <end position="632"/>
    </location>
</feature>
<feature type="splice variant" id="VSP_031779" description="In isoform 3." evidence="7">
    <location>
        <begin position="1"/>
        <end position="112"/>
    </location>
</feature>
<feature type="splice variant" id="VSP_031780" description="In isoform 2." evidence="8">
    <location>
        <begin position="90"/>
        <end position="106"/>
    </location>
</feature>
<feature type="splice variant" id="VSP_056734" description="In isoform 4." evidence="9">
    <original>I</original>
    <variation>IGILLILLIISIAELSISVTIASFRSKCWTQSDE</variation>
    <location>
        <position position="156"/>
    </location>
</feature>
<feature type="splice variant" id="VSP_031781" description="In isoform 3." evidence="7">
    <original>VLFFLPSDVTQNSE</original>
    <variation>DFILLTPPHSSHFL</variation>
    <location>
        <begin position="157"/>
        <end position="170"/>
    </location>
</feature>
<feature type="splice variant" id="VSP_031782" description="In isoform 3." evidence="7">
    <location>
        <begin position="171"/>
        <end position="679"/>
    </location>
</feature>
<feature type="sequence variant" id="VAR_039330" description="In dbSNP:rs7131283." evidence="5 6">
    <original>N</original>
    <variation>Y</variation>
    <location>
        <position position="177"/>
    </location>
</feature>
<feature type="sequence variant" id="VAR_039331" description="In dbSNP:rs3825020." evidence="4 5 6">
    <original>G</original>
    <variation>R</variation>
    <location>
        <position position="584"/>
    </location>
</feature>
<reference key="1">
    <citation type="submission" date="2001-08" db="EMBL/GenBank/DDBJ databases">
        <title>A new testis development gene NYD-SP21 from human testes.</title>
        <authorList>
            <person name="Li J.M."/>
            <person name="Sha J.H."/>
            <person name="Zhou Z.M."/>
        </authorList>
    </citation>
    <scope>NUCLEOTIDE SEQUENCE [MRNA] (ISOFORM 1)</scope>
    <scope>VARIANTS TYR-177 AND ARG-584</scope>
    <source>
        <tissue>Testis</tissue>
    </source>
</reference>
<reference key="2">
    <citation type="submission" date="2002-04" db="EMBL/GenBank/DDBJ databases">
        <title>MS4A genes.</title>
        <authorList>
            <person name="Liang Y."/>
            <person name="Tedder T.F."/>
        </authorList>
    </citation>
    <scope>NUCLEOTIDE SEQUENCE [MRNA] (ISOFORMS 1 AND 2)</scope>
    <scope>VARIANTS TYR-177 AND ARG-584</scope>
    <source>
        <tissue>Testis</tissue>
    </source>
</reference>
<reference key="3">
    <citation type="journal article" date="2006" name="Nature">
        <title>Human chromosome 11 DNA sequence and analysis including novel gene identification.</title>
        <authorList>
            <person name="Taylor T.D."/>
            <person name="Noguchi H."/>
            <person name="Totoki Y."/>
            <person name="Toyoda A."/>
            <person name="Kuroki Y."/>
            <person name="Dewar K."/>
            <person name="Lloyd C."/>
            <person name="Itoh T."/>
            <person name="Takeda T."/>
            <person name="Kim D.-W."/>
            <person name="She X."/>
            <person name="Barlow K.F."/>
            <person name="Bloom T."/>
            <person name="Bruford E."/>
            <person name="Chang J.L."/>
            <person name="Cuomo C.A."/>
            <person name="Eichler E."/>
            <person name="FitzGerald M.G."/>
            <person name="Jaffe D.B."/>
            <person name="LaButti K."/>
            <person name="Nicol R."/>
            <person name="Park H.-S."/>
            <person name="Seaman C."/>
            <person name="Sougnez C."/>
            <person name="Yang X."/>
            <person name="Zimmer A.R."/>
            <person name="Zody M.C."/>
            <person name="Birren B.W."/>
            <person name="Nusbaum C."/>
            <person name="Fujiyama A."/>
            <person name="Hattori M."/>
            <person name="Rogers J."/>
            <person name="Lander E.S."/>
            <person name="Sakaki Y."/>
        </authorList>
    </citation>
    <scope>NUCLEOTIDE SEQUENCE [LARGE SCALE GENOMIC DNA]</scope>
</reference>
<reference key="4">
    <citation type="journal article" date="2004" name="Genome Res.">
        <title>The status, quality, and expansion of the NIH full-length cDNA project: the Mammalian Gene Collection (MGC).</title>
        <authorList>
            <consortium name="The MGC Project Team"/>
        </authorList>
    </citation>
    <scope>NUCLEOTIDE SEQUENCE [LARGE SCALE MRNA] (ISOFORM 3)</scope>
    <source>
        <tissue>Testis</tissue>
    </source>
</reference>
<reference key="5">
    <citation type="journal article" date="2007" name="BMC Genomics">
        <title>The full-ORF clone resource of the German cDNA consortium.</title>
        <authorList>
            <person name="Bechtel S."/>
            <person name="Rosenfelder H."/>
            <person name="Duda A."/>
            <person name="Schmidt C.P."/>
            <person name="Ernst U."/>
            <person name="Wellenreuther R."/>
            <person name="Mehrle A."/>
            <person name="Schuster C."/>
            <person name="Bahr A."/>
            <person name="Bloecker H."/>
            <person name="Heubner D."/>
            <person name="Hoerlein A."/>
            <person name="Michel G."/>
            <person name="Wedler H."/>
            <person name="Koehrer K."/>
            <person name="Ottenwaelder B."/>
            <person name="Poustka A."/>
            <person name="Wiemann S."/>
            <person name="Schupp I."/>
        </authorList>
    </citation>
    <scope>NUCLEOTIDE SEQUENCE [LARGE SCALE MRNA] OF 191-679 (ISOFORMS 1/2)</scope>
    <scope>VARIANT ARG-584</scope>
    <source>
        <tissue>Testis</tissue>
    </source>
</reference>